<gene>
    <name type="primary">FGB</name>
</gene>
<accession>P68122</accession>
<accession>P14473</accession>
<protein>
    <recommendedName>
        <fullName>Fibrinogen beta chain</fullName>
    </recommendedName>
    <component>
        <recommendedName>
            <fullName>Fibrinopeptide B</fullName>
        </recommendedName>
    </component>
</protein>
<sequence length="19" mass="2295">ATDYDEEEDDRVKVRLDAR</sequence>
<evidence type="ECO:0000250" key="1">
    <source>
        <dbReference type="UniProtKB" id="E9PV24"/>
    </source>
</evidence>
<evidence type="ECO:0000250" key="2">
    <source>
        <dbReference type="UniProtKB" id="P02675"/>
    </source>
</evidence>
<evidence type="ECO:0000250" key="3">
    <source>
        <dbReference type="UniProtKB" id="P02676"/>
    </source>
</evidence>
<evidence type="ECO:0000269" key="4">
    <source ref="1"/>
</evidence>
<reference key="1">
    <citation type="journal article" date="1965" name="Acta Chem. Scand.">
        <title>Studies on fibrinopeptides from mammals.</title>
        <authorList>
            <person name="Blombaeck B."/>
            <person name="Blombaeck M."/>
            <person name="Grondahl N.J."/>
        </authorList>
    </citation>
    <scope>PROTEIN SEQUENCE</scope>
    <scope>SULFATION AT TYR-4</scope>
</reference>
<keyword id="KW-1064">Adaptive immunity</keyword>
<keyword id="KW-0094">Blood coagulation</keyword>
<keyword id="KW-0175">Coiled coil</keyword>
<keyword id="KW-0903">Direct protein sequencing</keyword>
<keyword id="KW-1015">Disulfide bond</keyword>
<keyword id="KW-0325">Glycoprotein</keyword>
<keyword id="KW-0356">Hemostasis</keyword>
<keyword id="KW-0391">Immunity</keyword>
<keyword id="KW-0399">Innate immunity</keyword>
<keyword id="KW-0964">Secreted</keyword>
<keyword id="KW-0765">Sulfation</keyword>
<feature type="peptide" id="PRO_0000009073" description="Fibrinopeptide B">
    <location>
        <begin position="1"/>
        <end position="19"/>
    </location>
</feature>
<feature type="modified residue" description="Sulfotyrosine" evidence="4">
    <location>
        <position position="4"/>
    </location>
</feature>
<feature type="glycosylation site" description="O-linked (GalNAc...) threonine" evidence="3">
    <location>
        <position position="2"/>
    </location>
</feature>
<feature type="non-terminal residue">
    <location>
        <position position="19"/>
    </location>
</feature>
<proteinExistence type="evidence at protein level"/>
<organism>
    <name type="scientific">Lama glama</name>
    <name type="common">Llama</name>
    <dbReference type="NCBI Taxonomy" id="9844"/>
    <lineage>
        <taxon>Eukaryota</taxon>
        <taxon>Metazoa</taxon>
        <taxon>Chordata</taxon>
        <taxon>Craniata</taxon>
        <taxon>Vertebrata</taxon>
        <taxon>Euteleostomi</taxon>
        <taxon>Mammalia</taxon>
        <taxon>Eutheria</taxon>
        <taxon>Laurasiatheria</taxon>
        <taxon>Artiodactyla</taxon>
        <taxon>Tylopoda</taxon>
        <taxon>Camelidae</taxon>
        <taxon>Lama</taxon>
    </lineage>
</organism>
<dbReference type="GlyCosmos" id="P68122">
    <property type="glycosylation" value="1 site, No reported glycans"/>
</dbReference>
<dbReference type="GO" id="GO:0005576">
    <property type="term" value="C:extracellular region"/>
    <property type="evidence" value="ECO:0007669"/>
    <property type="project" value="UniProtKB-SubCell"/>
</dbReference>
<dbReference type="GO" id="GO:0002250">
    <property type="term" value="P:adaptive immune response"/>
    <property type="evidence" value="ECO:0007669"/>
    <property type="project" value="UniProtKB-KW"/>
</dbReference>
<dbReference type="GO" id="GO:0007596">
    <property type="term" value="P:blood coagulation"/>
    <property type="evidence" value="ECO:0007669"/>
    <property type="project" value="UniProtKB-KW"/>
</dbReference>
<dbReference type="GO" id="GO:0045087">
    <property type="term" value="P:innate immune response"/>
    <property type="evidence" value="ECO:0007669"/>
    <property type="project" value="UniProtKB-KW"/>
</dbReference>
<comment type="function">
    <text evidence="1">Cleaved by the protease thrombin to yield monomers which, together with fibrinogen alpha (FGA) and fibrinogen gamma (FGG), polymerize to form an insoluble fibrin matrix. Fibrin has a major function in hemostasis as one of the primary components of blood clots. In addition, functions during the early stages of wound repair to stabilize the lesion and guide cell migration during re-epithelialization. Was originally thought to be essential for platelet aggregation, based on in vitro studies using anticoagulated blood. However subsequent studies have shown that it is not absolutely required for thrombus formation in vivo. Enhances expression of SELP in activated platelets. Maternal fibrinogen is essential for successful pregnancy. Fibrin deposition is also associated with infection, where it protects against IFNG-mediated hemorrhage. May also facilitate the antibacterial immune response via both innate and T-cell mediated pathways.</text>
</comment>
<comment type="subunit">
    <text evidence="2">Heterohexamer; disulfide linked. Contains 2 sets of 3 non-identical chains (alpha, beta and gamma). The 2 heterotrimers are in head to head conformation with the N-termini in a small central domain (By similarity).</text>
</comment>
<comment type="subcellular location">
    <subcellularLocation>
        <location>Secreted</location>
    </subcellularLocation>
</comment>
<comment type="domain">
    <text evidence="2">A long coiled coil structure formed by 3 polypeptide chains connects the central nodule to the C-terminal domains (distal nodules). The long C-terminal ends of the alpha chains fold back, contributing a fourth strand to the coiled coil structure.</text>
</comment>
<comment type="PTM">
    <text>Conversion of fibrinogen to fibrin is triggered by thrombin, which cleaves fibrinopeptides A and B from alpha and beta chains, and thus exposes the N-terminal polymerization sites responsible for the formation of the soft clot.</text>
</comment>
<name>FIBB_LAMGL</name>